<protein>
    <recommendedName>
        <fullName evidence="1">UvrABC system protein B</fullName>
        <shortName evidence="1">Protein UvrB</shortName>
    </recommendedName>
    <alternativeName>
        <fullName evidence="1">Excinuclease ABC subunit B</fullName>
    </alternativeName>
</protein>
<keyword id="KW-0067">ATP-binding</keyword>
<keyword id="KW-0963">Cytoplasm</keyword>
<keyword id="KW-0227">DNA damage</keyword>
<keyword id="KW-0228">DNA excision</keyword>
<keyword id="KW-0234">DNA repair</keyword>
<keyword id="KW-0267">Excision nuclease</keyword>
<keyword id="KW-0547">Nucleotide-binding</keyword>
<keyword id="KW-1185">Reference proteome</keyword>
<keyword id="KW-0742">SOS response</keyword>
<dbReference type="EMBL" id="AE017308">
    <property type="protein sequence ID" value="AAT28058.1"/>
    <property type="molecule type" value="Genomic_DNA"/>
</dbReference>
<dbReference type="RefSeq" id="WP_011265092.1">
    <property type="nucleotide sequence ID" value="NC_006908.1"/>
</dbReference>
<dbReference type="SMR" id="Q6KH72"/>
<dbReference type="STRING" id="267748.MMOB5720"/>
<dbReference type="KEGG" id="mmo:MMOB5720"/>
<dbReference type="eggNOG" id="COG0556">
    <property type="taxonomic scope" value="Bacteria"/>
</dbReference>
<dbReference type="HOGENOM" id="CLU_009621_2_1_14"/>
<dbReference type="OrthoDB" id="9806651at2"/>
<dbReference type="Proteomes" id="UP000009072">
    <property type="component" value="Chromosome"/>
</dbReference>
<dbReference type="GO" id="GO:0005737">
    <property type="term" value="C:cytoplasm"/>
    <property type="evidence" value="ECO:0007669"/>
    <property type="project" value="UniProtKB-SubCell"/>
</dbReference>
<dbReference type="GO" id="GO:0009380">
    <property type="term" value="C:excinuclease repair complex"/>
    <property type="evidence" value="ECO:0007669"/>
    <property type="project" value="InterPro"/>
</dbReference>
<dbReference type="GO" id="GO:0005524">
    <property type="term" value="F:ATP binding"/>
    <property type="evidence" value="ECO:0007669"/>
    <property type="project" value="UniProtKB-UniRule"/>
</dbReference>
<dbReference type="GO" id="GO:0016887">
    <property type="term" value="F:ATP hydrolysis activity"/>
    <property type="evidence" value="ECO:0007669"/>
    <property type="project" value="InterPro"/>
</dbReference>
<dbReference type="GO" id="GO:0003677">
    <property type="term" value="F:DNA binding"/>
    <property type="evidence" value="ECO:0007669"/>
    <property type="project" value="UniProtKB-UniRule"/>
</dbReference>
<dbReference type="GO" id="GO:0009381">
    <property type="term" value="F:excinuclease ABC activity"/>
    <property type="evidence" value="ECO:0007669"/>
    <property type="project" value="UniProtKB-UniRule"/>
</dbReference>
<dbReference type="GO" id="GO:0006289">
    <property type="term" value="P:nucleotide-excision repair"/>
    <property type="evidence" value="ECO:0007669"/>
    <property type="project" value="UniProtKB-UniRule"/>
</dbReference>
<dbReference type="GO" id="GO:0009432">
    <property type="term" value="P:SOS response"/>
    <property type="evidence" value="ECO:0007669"/>
    <property type="project" value="UniProtKB-UniRule"/>
</dbReference>
<dbReference type="CDD" id="cd17916">
    <property type="entry name" value="DEXHc_UvrB"/>
    <property type="match status" value="1"/>
</dbReference>
<dbReference type="Gene3D" id="3.40.50.300">
    <property type="entry name" value="P-loop containing nucleotide triphosphate hydrolases"/>
    <property type="match status" value="3"/>
</dbReference>
<dbReference type="Gene3D" id="4.10.860.10">
    <property type="entry name" value="UVR domain"/>
    <property type="match status" value="1"/>
</dbReference>
<dbReference type="HAMAP" id="MF_00204">
    <property type="entry name" value="UvrB"/>
    <property type="match status" value="1"/>
</dbReference>
<dbReference type="InterPro" id="IPR006935">
    <property type="entry name" value="Helicase/UvrB_N"/>
</dbReference>
<dbReference type="InterPro" id="IPR014001">
    <property type="entry name" value="Helicase_ATP-bd"/>
</dbReference>
<dbReference type="InterPro" id="IPR001650">
    <property type="entry name" value="Helicase_C-like"/>
</dbReference>
<dbReference type="InterPro" id="IPR027417">
    <property type="entry name" value="P-loop_NTPase"/>
</dbReference>
<dbReference type="InterPro" id="IPR001943">
    <property type="entry name" value="UVR_dom"/>
</dbReference>
<dbReference type="InterPro" id="IPR036876">
    <property type="entry name" value="UVR_dom_sf"/>
</dbReference>
<dbReference type="InterPro" id="IPR004807">
    <property type="entry name" value="UvrB"/>
</dbReference>
<dbReference type="InterPro" id="IPR041471">
    <property type="entry name" value="UvrB_inter"/>
</dbReference>
<dbReference type="InterPro" id="IPR024759">
    <property type="entry name" value="UvrB_YAD/RRR_dom"/>
</dbReference>
<dbReference type="NCBIfam" id="NF003673">
    <property type="entry name" value="PRK05298.1"/>
    <property type="match status" value="1"/>
</dbReference>
<dbReference type="NCBIfam" id="TIGR00631">
    <property type="entry name" value="uvrb"/>
    <property type="match status" value="1"/>
</dbReference>
<dbReference type="PANTHER" id="PTHR24029">
    <property type="entry name" value="UVRABC SYSTEM PROTEIN B"/>
    <property type="match status" value="1"/>
</dbReference>
<dbReference type="PANTHER" id="PTHR24029:SF0">
    <property type="entry name" value="UVRABC SYSTEM PROTEIN B"/>
    <property type="match status" value="1"/>
</dbReference>
<dbReference type="Pfam" id="PF00271">
    <property type="entry name" value="Helicase_C"/>
    <property type="match status" value="1"/>
</dbReference>
<dbReference type="Pfam" id="PF04851">
    <property type="entry name" value="ResIII"/>
    <property type="match status" value="1"/>
</dbReference>
<dbReference type="Pfam" id="PF02151">
    <property type="entry name" value="UVR"/>
    <property type="match status" value="1"/>
</dbReference>
<dbReference type="Pfam" id="PF12344">
    <property type="entry name" value="UvrB"/>
    <property type="match status" value="1"/>
</dbReference>
<dbReference type="Pfam" id="PF17757">
    <property type="entry name" value="UvrB_inter"/>
    <property type="match status" value="1"/>
</dbReference>
<dbReference type="SMART" id="SM00487">
    <property type="entry name" value="DEXDc"/>
    <property type="match status" value="1"/>
</dbReference>
<dbReference type="SMART" id="SM00490">
    <property type="entry name" value="HELICc"/>
    <property type="match status" value="1"/>
</dbReference>
<dbReference type="SUPFAM" id="SSF46600">
    <property type="entry name" value="C-terminal UvrC-binding domain of UvrB"/>
    <property type="match status" value="1"/>
</dbReference>
<dbReference type="SUPFAM" id="SSF52540">
    <property type="entry name" value="P-loop containing nucleoside triphosphate hydrolases"/>
    <property type="match status" value="2"/>
</dbReference>
<dbReference type="PROSITE" id="PS51192">
    <property type="entry name" value="HELICASE_ATP_BIND_1"/>
    <property type="match status" value="1"/>
</dbReference>
<dbReference type="PROSITE" id="PS51194">
    <property type="entry name" value="HELICASE_CTER"/>
    <property type="match status" value="1"/>
</dbReference>
<dbReference type="PROSITE" id="PS50151">
    <property type="entry name" value="UVR"/>
    <property type="match status" value="1"/>
</dbReference>
<evidence type="ECO:0000255" key="1">
    <source>
        <dbReference type="HAMAP-Rule" id="MF_00204"/>
    </source>
</evidence>
<gene>
    <name evidence="1" type="primary">uvrB</name>
    <name type="ordered locus">MMOB5720</name>
</gene>
<sequence>MENKGFELVSTYKPTGDQPRAIQELIEGLEQNKKSQVLLGVTGSGKTFTIANVIKAANRPVLLLSHNKTLASQLYSELKDFFPNNRVEYFVSYFDYYRPEAYMPNTDTYIDKTTKSNWDLEEMRMSTLNSISTKRDTIVVASVASIYGALKPKEYWSAFYNISIAQKISRKEFLLDLVQRGYKRNNVASEPGSFNAKGDFVDIIPAWTKGFHIRVEFFGDEIEKISTIDSNNKITIEKFKEYLIFPASAYTAPTGTIEAAVLRIREELHQRLEYFEKEGKLLEKQRLEDRTRNDLESLEEFGFCPGIENYSRHVDGRAEGEQPFTLFDYLPNDALLIIDESHMMIPQLNGMYNGDRARKLNLVNYGFRLPSALDNRPLQFHEFEKYEFQKIYISATPSDYEINQAHGEIVKQIIRPTGLLDPLIEIRREQNQVEDMFDEIQKQKAKKQRTLILATTKKVSEELTRYFQEKKEKVAYIHSDYTTFERNEILRKLRKGVYDTVIGINLLREGIDLPEVSLIMVLDANKESFFRSKKSLIQIVGRAARNVNGRVIFYANNISKSMEETIYDNLDKRKIQMDYNKKHNIIPKTIIKPITEAIEDKKLNESLISFMSHSKTKKSIKEKEALVKDLRNQMLDASKQLNFERAAELRDIILELEAN</sequence>
<feature type="chain" id="PRO_0000227329" description="UvrABC system protein B">
    <location>
        <begin position="1"/>
        <end position="659"/>
    </location>
</feature>
<feature type="domain" description="Helicase ATP-binding" evidence="1">
    <location>
        <begin position="27"/>
        <end position="414"/>
    </location>
</feature>
<feature type="domain" description="Helicase C-terminal" evidence="1">
    <location>
        <begin position="432"/>
        <end position="594"/>
    </location>
</feature>
<feature type="domain" description="UVR" evidence="1">
    <location>
        <begin position="624"/>
        <end position="659"/>
    </location>
</feature>
<feature type="short sequence motif" description="Beta-hairpin">
    <location>
        <begin position="93"/>
        <end position="116"/>
    </location>
</feature>
<feature type="binding site" evidence="1">
    <location>
        <begin position="40"/>
        <end position="47"/>
    </location>
    <ligand>
        <name>ATP</name>
        <dbReference type="ChEBI" id="CHEBI:30616"/>
    </ligand>
</feature>
<reference key="1">
    <citation type="journal article" date="2004" name="Genome Res.">
        <title>The complete genome and proteome of Mycoplasma mobile.</title>
        <authorList>
            <person name="Jaffe J.D."/>
            <person name="Stange-Thomann N."/>
            <person name="Smith C."/>
            <person name="DeCaprio D."/>
            <person name="Fisher S."/>
            <person name="Butler J."/>
            <person name="Calvo S."/>
            <person name="Elkins T."/>
            <person name="FitzGerald M.G."/>
            <person name="Hafez N."/>
            <person name="Kodira C.D."/>
            <person name="Major J."/>
            <person name="Wang S."/>
            <person name="Wilkinson J."/>
            <person name="Nicol R."/>
            <person name="Nusbaum C."/>
            <person name="Birren B."/>
            <person name="Berg H.C."/>
            <person name="Church G.M."/>
        </authorList>
    </citation>
    <scope>NUCLEOTIDE SEQUENCE [LARGE SCALE GENOMIC DNA]</scope>
    <source>
        <strain>ATCC 43663 / NCTC 11711 / 163 K</strain>
    </source>
</reference>
<accession>Q6KH72</accession>
<proteinExistence type="inferred from homology"/>
<name>UVRB_MYCM1</name>
<comment type="function">
    <text evidence="1">The UvrABC repair system catalyzes the recognition and processing of DNA lesions. A damage recognition complex composed of 2 UvrA and 2 UvrB subunits scans DNA for abnormalities. Upon binding of the UvrA(2)B(2) complex to a putative damaged site, the DNA wraps around one UvrB monomer. DNA wrap is dependent on ATP binding by UvrB and probably causes local melting of the DNA helix, facilitating insertion of UvrB beta-hairpin between the DNA strands. Then UvrB probes one DNA strand for the presence of a lesion. If a lesion is found the UvrA subunits dissociate and the UvrB-DNA preincision complex is formed. This complex is subsequently bound by UvrC and the second UvrB is released. If no lesion is found, the DNA wraps around the other UvrB subunit that will check the other stand for damage.</text>
</comment>
<comment type="subunit">
    <text evidence="1">Forms a heterotetramer with UvrA during the search for lesions. Interacts with UvrC in an incision complex.</text>
</comment>
<comment type="subcellular location">
    <subcellularLocation>
        <location evidence="1">Cytoplasm</location>
    </subcellularLocation>
</comment>
<comment type="domain">
    <text evidence="1">The beta-hairpin motif is involved in DNA binding.</text>
</comment>
<comment type="similarity">
    <text evidence="1">Belongs to the UvrB family.</text>
</comment>
<organism>
    <name type="scientific">Mycoplasma mobile (strain ATCC 43663 / 163K / NCTC 11711)</name>
    <name type="common">Mesomycoplasma mobile</name>
    <dbReference type="NCBI Taxonomy" id="267748"/>
    <lineage>
        <taxon>Bacteria</taxon>
        <taxon>Bacillati</taxon>
        <taxon>Mycoplasmatota</taxon>
        <taxon>Mycoplasmoidales</taxon>
        <taxon>Metamycoplasmataceae</taxon>
        <taxon>Mesomycoplasma</taxon>
    </lineage>
</organism>